<proteinExistence type="inferred from homology"/>
<gene>
    <name type="primary">dinB1</name>
    <name evidence="4" type="synonym">polY1</name>
    <name evidence="7" type="synonym">polYZ</name>
    <name evidence="6" type="synonym">yqjH</name>
    <name type="ordered locus">BSU23870</name>
</gene>
<protein>
    <recommendedName>
        <fullName>DNA polymerase IV 1</fullName>
        <shortName>Pol IV 1</shortName>
        <ecNumber>2.7.7.7</ecNumber>
    </recommendedName>
    <alternativeName>
        <fullName evidence="4">Error-prone translesion DNA polymerase PolY1</fullName>
    </alternativeName>
</protein>
<dbReference type="EC" id="2.7.7.7"/>
<dbReference type="EMBL" id="D84432">
    <property type="protein sequence ID" value="BAA12614.1"/>
    <property type="molecule type" value="Genomic_DNA"/>
</dbReference>
<dbReference type="EMBL" id="AL009126">
    <property type="protein sequence ID" value="CAB14319.2"/>
    <property type="molecule type" value="Genomic_DNA"/>
</dbReference>
<dbReference type="PIR" id="H69963">
    <property type="entry name" value="H69963"/>
</dbReference>
<dbReference type="RefSeq" id="WP_004398755.1">
    <property type="nucleotide sequence ID" value="NZ_OZ025638.1"/>
</dbReference>
<dbReference type="SMR" id="P54545"/>
<dbReference type="FunCoup" id="P54545">
    <property type="interactions" value="672"/>
</dbReference>
<dbReference type="IntAct" id="P54545">
    <property type="interactions" value="2"/>
</dbReference>
<dbReference type="STRING" id="224308.BSU23870"/>
<dbReference type="PaxDb" id="224308-BSU23870"/>
<dbReference type="EnsemblBacteria" id="CAB14319">
    <property type="protein sequence ID" value="CAB14319"/>
    <property type="gene ID" value="BSU_23870"/>
</dbReference>
<dbReference type="GeneID" id="938691"/>
<dbReference type="KEGG" id="bsu:BSU23870"/>
<dbReference type="PATRIC" id="fig|224308.179.peg.2600"/>
<dbReference type="eggNOG" id="COG0389">
    <property type="taxonomic scope" value="Bacteria"/>
</dbReference>
<dbReference type="InParanoid" id="P54545"/>
<dbReference type="OrthoDB" id="9808813at2"/>
<dbReference type="PhylomeDB" id="P54545"/>
<dbReference type="BioCyc" id="BSUB:BSU23870-MONOMER"/>
<dbReference type="Proteomes" id="UP000001570">
    <property type="component" value="Chromosome"/>
</dbReference>
<dbReference type="GO" id="GO:0005737">
    <property type="term" value="C:cytoplasm"/>
    <property type="evidence" value="ECO:0007669"/>
    <property type="project" value="UniProtKB-SubCell"/>
</dbReference>
<dbReference type="GO" id="GO:0003684">
    <property type="term" value="F:damaged DNA binding"/>
    <property type="evidence" value="ECO:0007669"/>
    <property type="project" value="InterPro"/>
</dbReference>
<dbReference type="GO" id="GO:0003887">
    <property type="term" value="F:DNA-directed DNA polymerase activity"/>
    <property type="evidence" value="ECO:0000318"/>
    <property type="project" value="GO_Central"/>
</dbReference>
<dbReference type="GO" id="GO:0000287">
    <property type="term" value="F:magnesium ion binding"/>
    <property type="evidence" value="ECO:0007669"/>
    <property type="project" value="UniProtKB-UniRule"/>
</dbReference>
<dbReference type="GO" id="GO:0006261">
    <property type="term" value="P:DNA-templated DNA replication"/>
    <property type="evidence" value="ECO:0007669"/>
    <property type="project" value="UniProtKB-UniRule"/>
</dbReference>
<dbReference type="GO" id="GO:0042276">
    <property type="term" value="P:error-prone translesion synthesis"/>
    <property type="evidence" value="ECO:0000318"/>
    <property type="project" value="GO_Central"/>
</dbReference>
<dbReference type="GO" id="GO:0009432">
    <property type="term" value="P:SOS response"/>
    <property type="evidence" value="ECO:0000318"/>
    <property type="project" value="GO_Central"/>
</dbReference>
<dbReference type="CDD" id="cd03586">
    <property type="entry name" value="PolY_Pol_IV_kappa"/>
    <property type="match status" value="1"/>
</dbReference>
<dbReference type="FunFam" id="1.10.150.20:FF:000061">
    <property type="entry name" value="DNA polymerase IV"/>
    <property type="match status" value="1"/>
</dbReference>
<dbReference type="FunFam" id="3.40.1170.60:FF:000001">
    <property type="entry name" value="DNA polymerase IV"/>
    <property type="match status" value="1"/>
</dbReference>
<dbReference type="Gene3D" id="3.30.70.270">
    <property type="match status" value="1"/>
</dbReference>
<dbReference type="Gene3D" id="3.40.1170.60">
    <property type="match status" value="1"/>
</dbReference>
<dbReference type="Gene3D" id="1.10.150.20">
    <property type="entry name" value="5' to 3' exonuclease, C-terminal subdomain"/>
    <property type="match status" value="1"/>
</dbReference>
<dbReference type="Gene3D" id="3.30.1490.100">
    <property type="entry name" value="DNA polymerase, Y-family, little finger domain"/>
    <property type="match status" value="1"/>
</dbReference>
<dbReference type="HAMAP" id="MF_01113">
    <property type="entry name" value="DNApol_IV"/>
    <property type="match status" value="1"/>
</dbReference>
<dbReference type="InterPro" id="IPR043502">
    <property type="entry name" value="DNA/RNA_pol_sf"/>
</dbReference>
<dbReference type="InterPro" id="IPR036775">
    <property type="entry name" value="DNA_pol_Y-fam_lit_finger_sf"/>
</dbReference>
<dbReference type="InterPro" id="IPR017961">
    <property type="entry name" value="DNA_pol_Y-fam_little_finger"/>
</dbReference>
<dbReference type="InterPro" id="IPR050116">
    <property type="entry name" value="DNA_polymerase-Y"/>
</dbReference>
<dbReference type="InterPro" id="IPR022880">
    <property type="entry name" value="DNApol_IV"/>
</dbReference>
<dbReference type="InterPro" id="IPR024728">
    <property type="entry name" value="PolY_HhH_motif"/>
</dbReference>
<dbReference type="InterPro" id="IPR043128">
    <property type="entry name" value="Rev_trsase/Diguanyl_cyclase"/>
</dbReference>
<dbReference type="InterPro" id="IPR001126">
    <property type="entry name" value="UmuC"/>
</dbReference>
<dbReference type="NCBIfam" id="NF002492">
    <property type="entry name" value="PRK01810.1"/>
    <property type="match status" value="1"/>
</dbReference>
<dbReference type="NCBIfam" id="NF002677">
    <property type="entry name" value="PRK02406.1"/>
    <property type="match status" value="1"/>
</dbReference>
<dbReference type="PANTHER" id="PTHR11076:SF33">
    <property type="entry name" value="DNA POLYMERASE KAPPA"/>
    <property type="match status" value="1"/>
</dbReference>
<dbReference type="PANTHER" id="PTHR11076">
    <property type="entry name" value="DNA REPAIR POLYMERASE UMUC / TRANSFERASE FAMILY MEMBER"/>
    <property type="match status" value="1"/>
</dbReference>
<dbReference type="Pfam" id="PF00817">
    <property type="entry name" value="IMS"/>
    <property type="match status" value="1"/>
</dbReference>
<dbReference type="Pfam" id="PF11799">
    <property type="entry name" value="IMS_C"/>
    <property type="match status" value="1"/>
</dbReference>
<dbReference type="Pfam" id="PF11798">
    <property type="entry name" value="IMS_HHH"/>
    <property type="match status" value="1"/>
</dbReference>
<dbReference type="PIRSF" id="PIRSF036603">
    <property type="entry name" value="DPol_eta"/>
    <property type="match status" value="1"/>
</dbReference>
<dbReference type="SUPFAM" id="SSF56672">
    <property type="entry name" value="DNA/RNA polymerases"/>
    <property type="match status" value="1"/>
</dbReference>
<dbReference type="SUPFAM" id="SSF100879">
    <property type="entry name" value="Lesion bypass DNA polymerase (Y-family), little finger domain"/>
    <property type="match status" value="1"/>
</dbReference>
<dbReference type="PROSITE" id="PS50173">
    <property type="entry name" value="UMUC"/>
    <property type="match status" value="1"/>
</dbReference>
<sequence length="414" mass="47006">MPGKSRIIFHIDMNSFYASVEMAYDPALRGKPVAVAGNVKERKGIVVTCSYEARARGVKTTMPVWQAKRHCPELIVLPPNFDRYRNSSRAMFTILREYTDLVEPVSIDEGYMDMTDTPYSSRALETAKEIQSRLQKELLLPSSIGIAPNKFLAKMASDMKKPLGITILRKRQVPDILWPLPVGEMHGVGKKTAEKLKGLGIHTIGELAAADEHSLKRLLGINGPRLKNKANGIHHAPVDPERIYEFKSVGNSSTLSHDSSDEEELLGVFRKLAASVSDRLQRKEVMASKLFIMIRYADWRTITRSTTLRNPIDQKNDILKEAEHLFFKHWNKNPVRLLGITGTDLVEKEQAYKQLDLFSFNEDAKDEPIQQMMEKLNKKYGTKLIRKGATLKKEESKTKGTSFNKDFFQDEKKS</sequence>
<evidence type="ECO:0000250" key="1"/>
<evidence type="ECO:0000256" key="2">
    <source>
        <dbReference type="SAM" id="MobiDB-lite"/>
    </source>
</evidence>
<evidence type="ECO:0000269" key="3">
    <source>
    </source>
</evidence>
<evidence type="ECO:0000303" key="4">
    <source>
    </source>
</evidence>
<evidence type="ECO:0000305" key="5"/>
<evidence type="ECO:0000312" key="6">
    <source>
        <dbReference type="EMBL" id="BAA12614.1"/>
    </source>
</evidence>
<evidence type="ECO:0000312" key="7">
    <source>
        <dbReference type="EMBL" id="CAB14319.2"/>
    </source>
</evidence>
<keyword id="KW-0963">Cytoplasm</keyword>
<keyword id="KW-0227">DNA damage</keyword>
<keyword id="KW-0234">DNA repair</keyword>
<keyword id="KW-0235">DNA replication</keyword>
<keyword id="KW-0238">DNA-binding</keyword>
<keyword id="KW-0239">DNA-directed DNA polymerase</keyword>
<keyword id="KW-0460">Magnesium</keyword>
<keyword id="KW-0479">Metal-binding</keyword>
<keyword id="KW-0515">Mutator protein</keyword>
<keyword id="KW-0548">Nucleotidyltransferase</keyword>
<keyword id="KW-1185">Reference proteome</keyword>
<keyword id="KW-0808">Transferase</keyword>
<accession>P54545</accession>
<name>DPO41_BACSU</name>
<reference key="1">
    <citation type="journal article" date="1996" name="Microbiology">
        <title>Systematic sequencing of the 283 kb 210 degrees-232 degrees region of the Bacillus subtilis genome containing the skin element and many sporulation genes.</title>
        <authorList>
            <person name="Mizuno M."/>
            <person name="Masuda S."/>
            <person name="Takemaru K."/>
            <person name="Hosono S."/>
            <person name="Sato T."/>
            <person name="Takeuchi M."/>
            <person name="Kobayashi Y."/>
        </authorList>
    </citation>
    <scope>NUCLEOTIDE SEQUENCE [GENOMIC DNA]</scope>
    <source>
        <strain>168 / JH642</strain>
    </source>
</reference>
<reference key="2">
    <citation type="journal article" date="1997" name="Nature">
        <title>The complete genome sequence of the Gram-positive bacterium Bacillus subtilis.</title>
        <authorList>
            <person name="Kunst F."/>
            <person name="Ogasawara N."/>
            <person name="Moszer I."/>
            <person name="Albertini A.M."/>
            <person name="Alloni G."/>
            <person name="Azevedo V."/>
            <person name="Bertero M.G."/>
            <person name="Bessieres P."/>
            <person name="Bolotin A."/>
            <person name="Borchert S."/>
            <person name="Borriss R."/>
            <person name="Boursier L."/>
            <person name="Brans A."/>
            <person name="Braun M."/>
            <person name="Brignell S.C."/>
            <person name="Bron S."/>
            <person name="Brouillet S."/>
            <person name="Bruschi C.V."/>
            <person name="Caldwell B."/>
            <person name="Capuano V."/>
            <person name="Carter N.M."/>
            <person name="Choi S.-K."/>
            <person name="Codani J.-J."/>
            <person name="Connerton I.F."/>
            <person name="Cummings N.J."/>
            <person name="Daniel R.A."/>
            <person name="Denizot F."/>
            <person name="Devine K.M."/>
            <person name="Duesterhoeft A."/>
            <person name="Ehrlich S.D."/>
            <person name="Emmerson P.T."/>
            <person name="Entian K.-D."/>
            <person name="Errington J."/>
            <person name="Fabret C."/>
            <person name="Ferrari E."/>
            <person name="Foulger D."/>
            <person name="Fritz C."/>
            <person name="Fujita M."/>
            <person name="Fujita Y."/>
            <person name="Fuma S."/>
            <person name="Galizzi A."/>
            <person name="Galleron N."/>
            <person name="Ghim S.-Y."/>
            <person name="Glaser P."/>
            <person name="Goffeau A."/>
            <person name="Golightly E.J."/>
            <person name="Grandi G."/>
            <person name="Guiseppi G."/>
            <person name="Guy B.J."/>
            <person name="Haga K."/>
            <person name="Haiech J."/>
            <person name="Harwood C.R."/>
            <person name="Henaut A."/>
            <person name="Hilbert H."/>
            <person name="Holsappel S."/>
            <person name="Hosono S."/>
            <person name="Hullo M.-F."/>
            <person name="Itaya M."/>
            <person name="Jones L.-M."/>
            <person name="Joris B."/>
            <person name="Karamata D."/>
            <person name="Kasahara Y."/>
            <person name="Klaerr-Blanchard M."/>
            <person name="Klein C."/>
            <person name="Kobayashi Y."/>
            <person name="Koetter P."/>
            <person name="Koningstein G."/>
            <person name="Krogh S."/>
            <person name="Kumano M."/>
            <person name="Kurita K."/>
            <person name="Lapidus A."/>
            <person name="Lardinois S."/>
            <person name="Lauber J."/>
            <person name="Lazarevic V."/>
            <person name="Lee S.-M."/>
            <person name="Levine A."/>
            <person name="Liu H."/>
            <person name="Masuda S."/>
            <person name="Mauel C."/>
            <person name="Medigue C."/>
            <person name="Medina N."/>
            <person name="Mellado R.P."/>
            <person name="Mizuno M."/>
            <person name="Moestl D."/>
            <person name="Nakai S."/>
            <person name="Noback M."/>
            <person name="Noone D."/>
            <person name="O'Reilly M."/>
            <person name="Ogawa K."/>
            <person name="Ogiwara A."/>
            <person name="Oudega B."/>
            <person name="Park S.-H."/>
            <person name="Parro V."/>
            <person name="Pohl T.M."/>
            <person name="Portetelle D."/>
            <person name="Porwollik S."/>
            <person name="Prescott A.M."/>
            <person name="Presecan E."/>
            <person name="Pujic P."/>
            <person name="Purnelle B."/>
            <person name="Rapoport G."/>
            <person name="Rey M."/>
            <person name="Reynolds S."/>
            <person name="Rieger M."/>
            <person name="Rivolta C."/>
            <person name="Rocha E."/>
            <person name="Roche B."/>
            <person name="Rose M."/>
            <person name="Sadaie Y."/>
            <person name="Sato T."/>
            <person name="Scanlan E."/>
            <person name="Schleich S."/>
            <person name="Schroeter R."/>
            <person name="Scoffone F."/>
            <person name="Sekiguchi J."/>
            <person name="Sekowska A."/>
            <person name="Seror S.J."/>
            <person name="Serror P."/>
            <person name="Shin B.-S."/>
            <person name="Soldo B."/>
            <person name="Sorokin A."/>
            <person name="Tacconi E."/>
            <person name="Takagi T."/>
            <person name="Takahashi H."/>
            <person name="Takemaru K."/>
            <person name="Takeuchi M."/>
            <person name="Tamakoshi A."/>
            <person name="Tanaka T."/>
            <person name="Terpstra P."/>
            <person name="Tognoni A."/>
            <person name="Tosato V."/>
            <person name="Uchiyama S."/>
            <person name="Vandenbol M."/>
            <person name="Vannier F."/>
            <person name="Vassarotti A."/>
            <person name="Viari A."/>
            <person name="Wambutt R."/>
            <person name="Wedler E."/>
            <person name="Wedler H."/>
            <person name="Weitzenegger T."/>
            <person name="Winters P."/>
            <person name="Wipat A."/>
            <person name="Yamamoto H."/>
            <person name="Yamane K."/>
            <person name="Yasumoto K."/>
            <person name="Yata K."/>
            <person name="Yoshida K."/>
            <person name="Yoshikawa H.-F."/>
            <person name="Zumstein E."/>
            <person name="Yoshikawa H."/>
            <person name="Danchin A."/>
        </authorList>
    </citation>
    <scope>NUCLEOTIDE SEQUENCE [LARGE SCALE GENOMIC DNA]</scope>
    <source>
        <strain>168</strain>
    </source>
</reference>
<reference key="3">
    <citation type="journal article" date="2009" name="Microbiology">
        <title>From a consortium sequence to a unified sequence: the Bacillus subtilis 168 reference genome a decade later.</title>
        <authorList>
            <person name="Barbe V."/>
            <person name="Cruveiller S."/>
            <person name="Kunst F."/>
            <person name="Lenoble P."/>
            <person name="Meurice G."/>
            <person name="Sekowska A."/>
            <person name="Vallenet D."/>
            <person name="Wang T."/>
            <person name="Moszer I."/>
            <person name="Medigue C."/>
            <person name="Danchin A."/>
        </authorList>
    </citation>
    <scope>SEQUENCE REVISION TO 331</scope>
</reference>
<reference key="4">
    <citation type="journal article" date="2019" name="DNA Repair">
        <title>Bacillus subtilis RarA acts at the interplay between replication and repair-by-recombination.</title>
        <authorList>
            <person name="Romero H."/>
            <person name="Torres R."/>
            <person name="Hernandez-Tamayo R."/>
            <person name="Carrasco B."/>
            <person name="Ayora S."/>
            <person name="Graumann P.L."/>
            <person name="Alonso J.C."/>
        </authorList>
    </citation>
    <scope>DISRUPTION PHENOTYPE</scope>
    <source>
        <strain>168 / YB886 / BG214</strain>
    </source>
</reference>
<comment type="function">
    <text evidence="1">Poorly processive, error-prone DNA polymerase involved in untargeted mutagenesis. Copies undamaged DNA at stalled replication forks, which arise in vivo from mismatched or misaligned primer ends. These misaligned primers can be extended by PolIV. Exhibits no 3'-5' exonuclease (proofreading) activity. May be involved in translesion synthesis (TSL), in conjunction with the beta clamp from PolIII (By similarity).</text>
</comment>
<comment type="catalytic activity">
    <reaction>
        <text>DNA(n) + a 2'-deoxyribonucleoside 5'-triphosphate = DNA(n+1) + diphosphate</text>
        <dbReference type="Rhea" id="RHEA:22508"/>
        <dbReference type="Rhea" id="RHEA-COMP:17339"/>
        <dbReference type="Rhea" id="RHEA-COMP:17340"/>
        <dbReference type="ChEBI" id="CHEBI:33019"/>
        <dbReference type="ChEBI" id="CHEBI:61560"/>
        <dbReference type="ChEBI" id="CHEBI:173112"/>
        <dbReference type="EC" id="2.7.7.7"/>
    </reaction>
</comment>
<comment type="cofactor">
    <cofactor evidence="1">
        <name>Mg(2+)</name>
        <dbReference type="ChEBI" id="CHEBI:18420"/>
    </cofactor>
    <text evidence="1">Binds 2 magnesium ions per subunit.</text>
</comment>
<comment type="subunit">
    <text evidence="1">Monomer.</text>
</comment>
<comment type="subcellular location">
    <subcellularLocation>
        <location evidence="1">Cytoplasm</location>
    </subcellularLocation>
</comment>
<comment type="disruption phenotype">
    <text evidence="3">No visible phenotype in the absence of DNA damage; in the presence of H(2)O(2) or methyl methanesulfonate (MMS) cells grow poorly on solid medium. A double polY1-rarA deletion is less sensitive to both H(2)O(2) and MMS.</text>
</comment>
<comment type="similarity">
    <text evidence="5">Belongs to the DNA polymerase type-Y family.</text>
</comment>
<feature type="chain" id="PRO_0000173904" description="DNA polymerase IV 1">
    <location>
        <begin position="1"/>
        <end position="414"/>
    </location>
</feature>
<feature type="domain" description="UmuC">
    <location>
        <begin position="8"/>
        <end position="189"/>
    </location>
</feature>
<feature type="region of interest" description="Disordered" evidence="2">
    <location>
        <begin position="391"/>
        <end position="414"/>
    </location>
</feature>
<feature type="active site" evidence="1">
    <location>
        <position position="109"/>
    </location>
</feature>
<feature type="binding site" evidence="1">
    <location>
        <position position="12"/>
    </location>
    <ligand>
        <name>Mg(2+)</name>
        <dbReference type="ChEBI" id="CHEBI:18420"/>
    </ligand>
</feature>
<feature type="binding site" evidence="1">
    <location>
        <position position="108"/>
    </location>
    <ligand>
        <name>Mg(2+)</name>
        <dbReference type="ChEBI" id="CHEBI:18420"/>
    </ligand>
</feature>
<feature type="site" description="Substrate discrimination" evidence="1">
    <location>
        <position position="17"/>
    </location>
</feature>
<feature type="sequence conflict" description="In Ref. 1; BAA12614." evidence="5" ref="1">
    <original>N</original>
    <variation>K</variation>
    <location>
        <position position="331"/>
    </location>
</feature>
<organism>
    <name type="scientific">Bacillus subtilis (strain 168)</name>
    <dbReference type="NCBI Taxonomy" id="224308"/>
    <lineage>
        <taxon>Bacteria</taxon>
        <taxon>Bacillati</taxon>
        <taxon>Bacillota</taxon>
        <taxon>Bacilli</taxon>
        <taxon>Bacillales</taxon>
        <taxon>Bacillaceae</taxon>
        <taxon>Bacillus</taxon>
    </lineage>
</organism>